<gene>
    <name evidence="1" type="primary">ulaR</name>
    <name type="ordered locus">SPA4198</name>
</gene>
<organism>
    <name type="scientific">Salmonella paratyphi A (strain ATCC 9150 / SARB42)</name>
    <dbReference type="NCBI Taxonomy" id="295319"/>
    <lineage>
        <taxon>Bacteria</taxon>
        <taxon>Pseudomonadati</taxon>
        <taxon>Pseudomonadota</taxon>
        <taxon>Gammaproteobacteria</taxon>
        <taxon>Enterobacterales</taxon>
        <taxon>Enterobacteriaceae</taxon>
        <taxon>Salmonella</taxon>
    </lineage>
</organism>
<proteinExistence type="inferred from homology"/>
<dbReference type="EMBL" id="CP000026">
    <property type="protein sequence ID" value="AAV79935.1"/>
    <property type="molecule type" value="Genomic_DNA"/>
</dbReference>
<dbReference type="RefSeq" id="WP_000133618.1">
    <property type="nucleotide sequence ID" value="NC_006511.1"/>
</dbReference>
<dbReference type="SMR" id="Q5PJ50"/>
<dbReference type="KEGG" id="spt:SPA4198"/>
<dbReference type="HOGENOM" id="CLU_060699_3_2_6"/>
<dbReference type="Proteomes" id="UP000008185">
    <property type="component" value="Chromosome"/>
</dbReference>
<dbReference type="GO" id="GO:0005737">
    <property type="term" value="C:cytoplasm"/>
    <property type="evidence" value="ECO:0007669"/>
    <property type="project" value="UniProtKB-SubCell"/>
</dbReference>
<dbReference type="GO" id="GO:0003677">
    <property type="term" value="F:DNA binding"/>
    <property type="evidence" value="ECO:0007669"/>
    <property type="project" value="UniProtKB-KW"/>
</dbReference>
<dbReference type="GO" id="GO:0003700">
    <property type="term" value="F:DNA-binding transcription factor activity"/>
    <property type="evidence" value="ECO:0007669"/>
    <property type="project" value="InterPro"/>
</dbReference>
<dbReference type="GO" id="GO:0045892">
    <property type="term" value="P:negative regulation of DNA-templated transcription"/>
    <property type="evidence" value="ECO:0007669"/>
    <property type="project" value="UniProtKB-UniRule"/>
</dbReference>
<dbReference type="FunFam" id="1.10.10.10:FF:000160">
    <property type="entry name" value="HTH-type transcriptional regulator UlaR"/>
    <property type="match status" value="1"/>
</dbReference>
<dbReference type="Gene3D" id="1.10.10.10">
    <property type="entry name" value="Winged helix-like DNA-binding domain superfamily/Winged helix DNA-binding domain"/>
    <property type="match status" value="1"/>
</dbReference>
<dbReference type="HAMAP" id="MF_01563">
    <property type="entry name" value="HTH_type_UlaR"/>
    <property type="match status" value="1"/>
</dbReference>
<dbReference type="InterPro" id="IPR050313">
    <property type="entry name" value="Carb_Metab_HTH_regulators"/>
</dbReference>
<dbReference type="InterPro" id="IPR014036">
    <property type="entry name" value="DeoR-like_C"/>
</dbReference>
<dbReference type="InterPro" id="IPR001034">
    <property type="entry name" value="DeoR_HTH"/>
</dbReference>
<dbReference type="InterPro" id="IPR037171">
    <property type="entry name" value="NagB/RpiA_transferase-like"/>
</dbReference>
<dbReference type="InterPro" id="IPR018356">
    <property type="entry name" value="Tscrpt_reg_HTH_DeoR_CS"/>
</dbReference>
<dbReference type="InterPro" id="IPR023711">
    <property type="entry name" value="Tscrpt_reg_HTH_UlaR"/>
</dbReference>
<dbReference type="InterPro" id="IPR036388">
    <property type="entry name" value="WH-like_DNA-bd_sf"/>
</dbReference>
<dbReference type="InterPro" id="IPR036390">
    <property type="entry name" value="WH_DNA-bd_sf"/>
</dbReference>
<dbReference type="NCBIfam" id="NF010034">
    <property type="entry name" value="PRK13509.1"/>
    <property type="match status" value="1"/>
</dbReference>
<dbReference type="PANTHER" id="PTHR30363">
    <property type="entry name" value="HTH-TYPE TRANSCRIPTIONAL REGULATOR SRLR-RELATED"/>
    <property type="match status" value="1"/>
</dbReference>
<dbReference type="PANTHER" id="PTHR30363:SF55">
    <property type="entry name" value="HTH-TYPE TRANSCRIPTIONAL REGULATOR ULAR"/>
    <property type="match status" value="1"/>
</dbReference>
<dbReference type="Pfam" id="PF00455">
    <property type="entry name" value="DeoRC"/>
    <property type="match status" value="1"/>
</dbReference>
<dbReference type="Pfam" id="PF08220">
    <property type="entry name" value="HTH_DeoR"/>
    <property type="match status" value="1"/>
</dbReference>
<dbReference type="PRINTS" id="PR00037">
    <property type="entry name" value="HTHLACR"/>
</dbReference>
<dbReference type="SMART" id="SM01134">
    <property type="entry name" value="DeoRC"/>
    <property type="match status" value="1"/>
</dbReference>
<dbReference type="SMART" id="SM00420">
    <property type="entry name" value="HTH_DEOR"/>
    <property type="match status" value="1"/>
</dbReference>
<dbReference type="SUPFAM" id="SSF100950">
    <property type="entry name" value="NagB/RpiA/CoA transferase-like"/>
    <property type="match status" value="1"/>
</dbReference>
<dbReference type="SUPFAM" id="SSF46785">
    <property type="entry name" value="Winged helix' DNA-binding domain"/>
    <property type="match status" value="1"/>
</dbReference>
<dbReference type="PROSITE" id="PS00894">
    <property type="entry name" value="HTH_DEOR_1"/>
    <property type="match status" value="1"/>
</dbReference>
<dbReference type="PROSITE" id="PS51000">
    <property type="entry name" value="HTH_DEOR_2"/>
    <property type="match status" value="1"/>
</dbReference>
<evidence type="ECO:0000255" key="1">
    <source>
        <dbReference type="HAMAP-Rule" id="MF_01563"/>
    </source>
</evidence>
<feature type="chain" id="PRO_0000234023" description="HTH-type transcriptional regulator UlaR">
    <location>
        <begin position="1"/>
        <end position="251"/>
    </location>
</feature>
<feature type="domain" description="HTH deoR-type" evidence="1">
    <location>
        <begin position="3"/>
        <end position="58"/>
    </location>
</feature>
<feature type="DNA-binding region" description="H-T-H motif" evidence="1">
    <location>
        <begin position="20"/>
        <end position="39"/>
    </location>
</feature>
<comment type="function">
    <text evidence="1">Represses ulaG and the ulaABCDEF operon.</text>
</comment>
<comment type="subcellular location">
    <subcellularLocation>
        <location evidence="1">Cytoplasm</location>
    </subcellularLocation>
</comment>
<protein>
    <recommendedName>
        <fullName evidence="1">HTH-type transcriptional regulator UlaR</fullName>
    </recommendedName>
</protein>
<name>ULAR_SALPA</name>
<reference key="1">
    <citation type="journal article" date="2004" name="Nat. Genet.">
        <title>Comparison of genome degradation in Paratyphi A and Typhi, human-restricted serovars of Salmonella enterica that cause typhoid.</title>
        <authorList>
            <person name="McClelland M."/>
            <person name="Sanderson K.E."/>
            <person name="Clifton S.W."/>
            <person name="Latreille P."/>
            <person name="Porwollik S."/>
            <person name="Sabo A."/>
            <person name="Meyer R."/>
            <person name="Bieri T."/>
            <person name="Ozersky P."/>
            <person name="McLellan M."/>
            <person name="Harkins C.R."/>
            <person name="Wang C."/>
            <person name="Nguyen C."/>
            <person name="Berghoff A."/>
            <person name="Elliott G."/>
            <person name="Kohlberg S."/>
            <person name="Strong C."/>
            <person name="Du F."/>
            <person name="Carter J."/>
            <person name="Kremizki C."/>
            <person name="Layman D."/>
            <person name="Leonard S."/>
            <person name="Sun H."/>
            <person name="Fulton L."/>
            <person name="Nash W."/>
            <person name="Miner T."/>
            <person name="Minx P."/>
            <person name="Delehaunty K."/>
            <person name="Fronick C."/>
            <person name="Magrini V."/>
            <person name="Nhan M."/>
            <person name="Warren W."/>
            <person name="Florea L."/>
            <person name="Spieth J."/>
            <person name="Wilson R.K."/>
        </authorList>
    </citation>
    <scope>NUCLEOTIDE SEQUENCE [LARGE SCALE GENOMIC DNA]</scope>
    <source>
        <strain>ATCC 9150 / SARB42</strain>
    </source>
</reference>
<accession>Q5PJ50</accession>
<sequence>MTEAQRHQILLDMLAQLGFVTVENVIERLGISPATARRDINKLDESGKLKKVRNGAEAITQQRPRWTPMNLHQAQNHDEKVRIAKAASQLVNPGESVVINCGSTAFLLGREMCGKPVQIITNYLPLANYLIDQEHDSVIIMGGQYNKSQSITLSPQGSENSLYAGHWMFTSGKGLTADGLYKTDMLTAMAEQKMLSVVGKLVALVDSSKIGERAGMLFSRADQIAMLITGKNANPQVLQQLEAQGVSILRV</sequence>
<keyword id="KW-0963">Cytoplasm</keyword>
<keyword id="KW-0238">DNA-binding</keyword>
<keyword id="KW-0678">Repressor</keyword>
<keyword id="KW-0804">Transcription</keyword>
<keyword id="KW-0805">Transcription regulation</keyword>